<reference key="1">
    <citation type="journal article" date="1999" name="Nature">
        <title>Sequence and analysis of chromosome 4 of the plant Arabidopsis thaliana.</title>
        <authorList>
            <person name="Mayer K.F.X."/>
            <person name="Schueller C."/>
            <person name="Wambutt R."/>
            <person name="Murphy G."/>
            <person name="Volckaert G."/>
            <person name="Pohl T."/>
            <person name="Duesterhoeft A."/>
            <person name="Stiekema W."/>
            <person name="Entian K.-D."/>
            <person name="Terryn N."/>
            <person name="Harris B."/>
            <person name="Ansorge W."/>
            <person name="Brandt P."/>
            <person name="Grivell L.A."/>
            <person name="Rieger M."/>
            <person name="Weichselgartner M."/>
            <person name="de Simone V."/>
            <person name="Obermaier B."/>
            <person name="Mache R."/>
            <person name="Mueller M."/>
            <person name="Kreis M."/>
            <person name="Delseny M."/>
            <person name="Puigdomenech P."/>
            <person name="Watson M."/>
            <person name="Schmidtheini T."/>
            <person name="Reichert B."/>
            <person name="Portetelle D."/>
            <person name="Perez-Alonso M."/>
            <person name="Boutry M."/>
            <person name="Bancroft I."/>
            <person name="Vos P."/>
            <person name="Hoheisel J."/>
            <person name="Zimmermann W."/>
            <person name="Wedler H."/>
            <person name="Ridley P."/>
            <person name="Langham S.-A."/>
            <person name="McCullagh B."/>
            <person name="Bilham L."/>
            <person name="Robben J."/>
            <person name="van der Schueren J."/>
            <person name="Grymonprez B."/>
            <person name="Chuang Y.-J."/>
            <person name="Vandenbussche F."/>
            <person name="Braeken M."/>
            <person name="Weltjens I."/>
            <person name="Voet M."/>
            <person name="Bastiaens I."/>
            <person name="Aert R."/>
            <person name="Defoor E."/>
            <person name="Weitzenegger T."/>
            <person name="Bothe G."/>
            <person name="Ramsperger U."/>
            <person name="Hilbert H."/>
            <person name="Braun M."/>
            <person name="Holzer E."/>
            <person name="Brandt A."/>
            <person name="Peters S."/>
            <person name="van Staveren M."/>
            <person name="Dirkse W."/>
            <person name="Mooijman P."/>
            <person name="Klein Lankhorst R."/>
            <person name="Rose M."/>
            <person name="Hauf J."/>
            <person name="Koetter P."/>
            <person name="Berneiser S."/>
            <person name="Hempel S."/>
            <person name="Feldpausch M."/>
            <person name="Lamberth S."/>
            <person name="Van den Daele H."/>
            <person name="De Keyser A."/>
            <person name="Buysshaert C."/>
            <person name="Gielen J."/>
            <person name="Villarroel R."/>
            <person name="De Clercq R."/>
            <person name="van Montagu M."/>
            <person name="Rogers J."/>
            <person name="Cronin A."/>
            <person name="Quail M.A."/>
            <person name="Bray-Allen S."/>
            <person name="Clark L."/>
            <person name="Doggett J."/>
            <person name="Hall S."/>
            <person name="Kay M."/>
            <person name="Lennard N."/>
            <person name="McLay K."/>
            <person name="Mayes R."/>
            <person name="Pettett A."/>
            <person name="Rajandream M.A."/>
            <person name="Lyne M."/>
            <person name="Benes V."/>
            <person name="Rechmann S."/>
            <person name="Borkova D."/>
            <person name="Bloecker H."/>
            <person name="Scharfe M."/>
            <person name="Grimm M."/>
            <person name="Loehnert T.-H."/>
            <person name="Dose S."/>
            <person name="de Haan M."/>
            <person name="Maarse A.C."/>
            <person name="Schaefer M."/>
            <person name="Mueller-Auer S."/>
            <person name="Gabel C."/>
            <person name="Fuchs M."/>
            <person name="Fartmann B."/>
            <person name="Granderath K."/>
            <person name="Dauner D."/>
            <person name="Herzl A."/>
            <person name="Neumann S."/>
            <person name="Argiriou A."/>
            <person name="Vitale D."/>
            <person name="Liguori R."/>
            <person name="Piravandi E."/>
            <person name="Massenet O."/>
            <person name="Quigley F."/>
            <person name="Clabauld G."/>
            <person name="Muendlein A."/>
            <person name="Felber R."/>
            <person name="Schnabl S."/>
            <person name="Hiller R."/>
            <person name="Schmidt W."/>
            <person name="Lecharny A."/>
            <person name="Aubourg S."/>
            <person name="Chefdor F."/>
            <person name="Cooke R."/>
            <person name="Berger C."/>
            <person name="Monfort A."/>
            <person name="Casacuberta E."/>
            <person name="Gibbons T."/>
            <person name="Weber N."/>
            <person name="Vandenbol M."/>
            <person name="Bargues M."/>
            <person name="Terol J."/>
            <person name="Torres A."/>
            <person name="Perez-Perez A."/>
            <person name="Purnelle B."/>
            <person name="Bent E."/>
            <person name="Johnson S."/>
            <person name="Tacon D."/>
            <person name="Jesse T."/>
            <person name="Heijnen L."/>
            <person name="Schwarz S."/>
            <person name="Scholler P."/>
            <person name="Heber S."/>
            <person name="Francs P."/>
            <person name="Bielke C."/>
            <person name="Frishman D."/>
            <person name="Haase D."/>
            <person name="Lemcke K."/>
            <person name="Mewes H.-W."/>
            <person name="Stocker S."/>
            <person name="Zaccaria P."/>
            <person name="Bevan M."/>
            <person name="Wilson R.K."/>
            <person name="de la Bastide M."/>
            <person name="Habermann K."/>
            <person name="Parnell L."/>
            <person name="Dedhia N."/>
            <person name="Gnoj L."/>
            <person name="Schutz K."/>
            <person name="Huang E."/>
            <person name="Spiegel L."/>
            <person name="Sekhon M."/>
            <person name="Murray J."/>
            <person name="Sheet P."/>
            <person name="Cordes M."/>
            <person name="Abu-Threideh J."/>
            <person name="Stoneking T."/>
            <person name="Kalicki J."/>
            <person name="Graves T."/>
            <person name="Harmon G."/>
            <person name="Edwards J."/>
            <person name="Latreille P."/>
            <person name="Courtney L."/>
            <person name="Cloud J."/>
            <person name="Abbott A."/>
            <person name="Scott K."/>
            <person name="Johnson D."/>
            <person name="Minx P."/>
            <person name="Bentley D."/>
            <person name="Fulton B."/>
            <person name="Miller N."/>
            <person name="Greco T."/>
            <person name="Kemp K."/>
            <person name="Kramer J."/>
            <person name="Fulton L."/>
            <person name="Mardis E."/>
            <person name="Dante M."/>
            <person name="Pepin K."/>
            <person name="Hillier L.W."/>
            <person name="Nelson J."/>
            <person name="Spieth J."/>
            <person name="Ryan E."/>
            <person name="Andrews S."/>
            <person name="Geisel C."/>
            <person name="Layman D."/>
            <person name="Du H."/>
            <person name="Ali J."/>
            <person name="Berghoff A."/>
            <person name="Jones K."/>
            <person name="Drone K."/>
            <person name="Cotton M."/>
            <person name="Joshu C."/>
            <person name="Antonoiu B."/>
            <person name="Zidanic M."/>
            <person name="Strong C."/>
            <person name="Sun H."/>
            <person name="Lamar B."/>
            <person name="Yordan C."/>
            <person name="Ma P."/>
            <person name="Zhong J."/>
            <person name="Preston R."/>
            <person name="Vil D."/>
            <person name="Shekher M."/>
            <person name="Matero A."/>
            <person name="Shah R."/>
            <person name="Swaby I.K."/>
            <person name="O'Shaughnessy A."/>
            <person name="Rodriguez M."/>
            <person name="Hoffman J."/>
            <person name="Till S."/>
            <person name="Granat S."/>
            <person name="Shohdy N."/>
            <person name="Hasegawa A."/>
            <person name="Hameed A."/>
            <person name="Lodhi M."/>
            <person name="Johnson A."/>
            <person name="Chen E."/>
            <person name="Marra M.A."/>
            <person name="Martienssen R."/>
            <person name="McCombie W.R."/>
        </authorList>
    </citation>
    <scope>NUCLEOTIDE SEQUENCE [LARGE SCALE GENOMIC DNA]</scope>
    <source>
        <strain>cv. Columbia</strain>
    </source>
</reference>
<reference key="2">
    <citation type="journal article" date="2017" name="Plant J.">
        <title>Araport11: a complete reannotation of the Arabidopsis thaliana reference genome.</title>
        <authorList>
            <person name="Cheng C.Y."/>
            <person name="Krishnakumar V."/>
            <person name="Chan A.P."/>
            <person name="Thibaud-Nissen F."/>
            <person name="Schobel S."/>
            <person name="Town C.D."/>
        </authorList>
    </citation>
    <scope>GENOME REANNOTATION</scope>
    <source>
        <strain>cv. Columbia</strain>
    </source>
</reference>
<reference key="3">
    <citation type="journal article" date="2003" name="Science">
        <title>Empirical analysis of transcriptional activity in the Arabidopsis genome.</title>
        <authorList>
            <person name="Yamada K."/>
            <person name="Lim J."/>
            <person name="Dale J.M."/>
            <person name="Chen H."/>
            <person name="Shinn P."/>
            <person name="Palm C.J."/>
            <person name="Southwick A.M."/>
            <person name="Wu H.C."/>
            <person name="Kim C.J."/>
            <person name="Nguyen M."/>
            <person name="Pham P.K."/>
            <person name="Cheuk R.F."/>
            <person name="Karlin-Newmann G."/>
            <person name="Liu S.X."/>
            <person name="Lam B."/>
            <person name="Sakano H."/>
            <person name="Wu T."/>
            <person name="Yu G."/>
            <person name="Miranda M."/>
            <person name="Quach H.L."/>
            <person name="Tripp M."/>
            <person name="Chang C.H."/>
            <person name="Lee J.M."/>
            <person name="Toriumi M.J."/>
            <person name="Chan M.M."/>
            <person name="Tang C.C."/>
            <person name="Onodera C.S."/>
            <person name="Deng J.M."/>
            <person name="Akiyama K."/>
            <person name="Ansari Y."/>
            <person name="Arakawa T."/>
            <person name="Banh J."/>
            <person name="Banno F."/>
            <person name="Bowser L."/>
            <person name="Brooks S.Y."/>
            <person name="Carninci P."/>
            <person name="Chao Q."/>
            <person name="Choy N."/>
            <person name="Enju A."/>
            <person name="Goldsmith A.D."/>
            <person name="Gurjal M."/>
            <person name="Hansen N.F."/>
            <person name="Hayashizaki Y."/>
            <person name="Johnson-Hopson C."/>
            <person name="Hsuan V.W."/>
            <person name="Iida K."/>
            <person name="Karnes M."/>
            <person name="Khan S."/>
            <person name="Koesema E."/>
            <person name="Ishida J."/>
            <person name="Jiang P.X."/>
            <person name="Jones T."/>
            <person name="Kawai J."/>
            <person name="Kamiya A."/>
            <person name="Meyers C."/>
            <person name="Nakajima M."/>
            <person name="Narusaka M."/>
            <person name="Seki M."/>
            <person name="Sakurai T."/>
            <person name="Satou M."/>
            <person name="Tamse R."/>
            <person name="Vaysberg M."/>
            <person name="Wallender E.K."/>
            <person name="Wong C."/>
            <person name="Yamamura Y."/>
            <person name="Yuan S."/>
            <person name="Shinozaki K."/>
            <person name="Davis R.W."/>
            <person name="Theologis A."/>
            <person name="Ecker J.R."/>
        </authorList>
    </citation>
    <scope>NUCLEOTIDE SEQUENCE [LARGE SCALE MRNA] OF 55-366</scope>
    <source>
        <strain>cv. Columbia</strain>
    </source>
</reference>
<reference key="4">
    <citation type="journal article" date="2005" name="Plant J.">
        <title>AtATG18a is required for the formation of autophagosomes during nutrient stress and senescence in Arabidopsis thaliana.</title>
        <authorList>
            <person name="Xiong Y."/>
            <person name="Contento A.L."/>
            <person name="Bassham D.C."/>
        </authorList>
    </citation>
    <scope>GENE FAMILY</scope>
    <scope>TISSUE SPECIFICITY</scope>
</reference>
<organism>
    <name type="scientific">Arabidopsis thaliana</name>
    <name type="common">Mouse-ear cress</name>
    <dbReference type="NCBI Taxonomy" id="3702"/>
    <lineage>
        <taxon>Eukaryota</taxon>
        <taxon>Viridiplantae</taxon>
        <taxon>Streptophyta</taxon>
        <taxon>Embryophyta</taxon>
        <taxon>Tracheophyta</taxon>
        <taxon>Spermatophyta</taxon>
        <taxon>Magnoliopsida</taxon>
        <taxon>eudicotyledons</taxon>
        <taxon>Gunneridae</taxon>
        <taxon>Pentapetalae</taxon>
        <taxon>rosids</taxon>
        <taxon>malvids</taxon>
        <taxon>Brassicales</taxon>
        <taxon>Brassicaceae</taxon>
        <taxon>Camelineae</taxon>
        <taxon>Arabidopsis</taxon>
    </lineage>
</organism>
<keyword id="KW-0025">Alternative splicing</keyword>
<keyword id="KW-0072">Autophagy</keyword>
<keyword id="KW-0472">Membrane</keyword>
<keyword id="KW-0653">Protein transport</keyword>
<keyword id="KW-1185">Reference proteome</keyword>
<keyword id="KW-0677">Repeat</keyword>
<keyword id="KW-0813">Transport</keyword>
<keyword id="KW-0926">Vacuole</keyword>
<keyword id="KW-0853">WD repeat</keyword>
<name>AT18B_ARATH</name>
<proteinExistence type="evidence at transcript level"/>
<dbReference type="EMBL" id="AL161577">
    <property type="protein sequence ID" value="CAB79769.1"/>
    <property type="status" value="ALT_SEQ"/>
    <property type="molecule type" value="Genomic_DNA"/>
</dbReference>
<dbReference type="EMBL" id="CP002687">
    <property type="protein sequence ID" value="AEE85774.2"/>
    <property type="molecule type" value="Genomic_DNA"/>
</dbReference>
<dbReference type="EMBL" id="AY142529">
    <property type="protein sequence ID" value="AAN13072.1"/>
    <property type="molecule type" value="mRNA"/>
</dbReference>
<dbReference type="PIR" id="H85356">
    <property type="entry name" value="H85356"/>
</dbReference>
<dbReference type="RefSeq" id="NP_001320091.1">
    <molecule id="Q8H1Q8-1"/>
    <property type="nucleotide sequence ID" value="NM_001342010.1"/>
</dbReference>
<dbReference type="RefSeq" id="NP_001320092.1">
    <property type="nucleotide sequence ID" value="NM_001342011.1"/>
</dbReference>
<dbReference type="SMR" id="Q8H1Q8"/>
<dbReference type="BioGRID" id="14461">
    <property type="interactions" value="1"/>
</dbReference>
<dbReference type="FunCoup" id="Q8H1Q8">
    <property type="interactions" value="1913"/>
</dbReference>
<dbReference type="STRING" id="3702.Q8H1Q8"/>
<dbReference type="iPTMnet" id="Q8H1Q8"/>
<dbReference type="PaxDb" id="3702-AT4G30510.1"/>
<dbReference type="ProteomicsDB" id="246819">
    <molecule id="Q8H1Q8-1"/>
</dbReference>
<dbReference type="EnsemblPlants" id="AT4G30510.1">
    <molecule id="Q8H1Q8-1"/>
    <property type="protein sequence ID" value="AT4G30510.1"/>
    <property type="gene ID" value="AT4G30510"/>
</dbReference>
<dbReference type="GeneID" id="829174"/>
<dbReference type="Gramene" id="AT4G30510.1">
    <molecule id="Q8H1Q8-1"/>
    <property type="protein sequence ID" value="AT4G30510.1"/>
    <property type="gene ID" value="AT4G30510"/>
</dbReference>
<dbReference type="KEGG" id="ath:AT4G30510"/>
<dbReference type="Araport" id="AT4G30510"/>
<dbReference type="TAIR" id="AT4G30510">
    <property type="gene designation" value="ATG18B"/>
</dbReference>
<dbReference type="eggNOG" id="KOG2110">
    <property type="taxonomic scope" value="Eukaryota"/>
</dbReference>
<dbReference type="HOGENOM" id="CLU_025895_3_0_1"/>
<dbReference type="InParanoid" id="Q8H1Q8"/>
<dbReference type="OMA" id="HCQINAH"/>
<dbReference type="PRO" id="PR:Q8H1Q8"/>
<dbReference type="Proteomes" id="UP000006548">
    <property type="component" value="Chromosome 4"/>
</dbReference>
<dbReference type="ExpressionAtlas" id="Q8H1Q8">
    <property type="expression patterns" value="baseline and differential"/>
</dbReference>
<dbReference type="GO" id="GO:0034045">
    <property type="term" value="C:phagophore assembly site membrane"/>
    <property type="evidence" value="ECO:0007669"/>
    <property type="project" value="UniProtKB-SubCell"/>
</dbReference>
<dbReference type="GO" id="GO:0005774">
    <property type="term" value="C:vacuolar membrane"/>
    <property type="evidence" value="ECO:0007669"/>
    <property type="project" value="UniProtKB-SubCell"/>
</dbReference>
<dbReference type="GO" id="GO:0006914">
    <property type="term" value="P:autophagy"/>
    <property type="evidence" value="ECO:0007669"/>
    <property type="project" value="UniProtKB-KW"/>
</dbReference>
<dbReference type="GO" id="GO:0015031">
    <property type="term" value="P:protein transport"/>
    <property type="evidence" value="ECO:0007669"/>
    <property type="project" value="UniProtKB-KW"/>
</dbReference>
<dbReference type="FunFam" id="2.130.10.10:FF:002630">
    <property type="entry name" value="Autophagy-related protein 18b"/>
    <property type="match status" value="1"/>
</dbReference>
<dbReference type="Gene3D" id="2.130.10.10">
    <property type="entry name" value="YVTN repeat-like/Quinoprotein amine dehydrogenase"/>
    <property type="match status" value="1"/>
</dbReference>
<dbReference type="InterPro" id="IPR048720">
    <property type="entry name" value="PROPPIN"/>
</dbReference>
<dbReference type="InterPro" id="IPR015943">
    <property type="entry name" value="WD40/YVTN_repeat-like_dom_sf"/>
</dbReference>
<dbReference type="InterPro" id="IPR036322">
    <property type="entry name" value="WD40_repeat_dom_sf"/>
</dbReference>
<dbReference type="InterPro" id="IPR001680">
    <property type="entry name" value="WD40_rpt"/>
</dbReference>
<dbReference type="PANTHER" id="PTHR11227">
    <property type="entry name" value="WD-REPEAT PROTEIN INTERACTING WITH PHOSPHOINOSIDES WIPI -RELATED"/>
    <property type="match status" value="1"/>
</dbReference>
<dbReference type="Pfam" id="PF21032">
    <property type="entry name" value="PROPPIN"/>
    <property type="match status" value="1"/>
</dbReference>
<dbReference type="SMART" id="SM00320">
    <property type="entry name" value="WD40"/>
    <property type="match status" value="3"/>
</dbReference>
<dbReference type="SUPFAM" id="SSF50978">
    <property type="entry name" value="WD40 repeat-like"/>
    <property type="match status" value="1"/>
</dbReference>
<gene>
    <name type="primary">ATG18B</name>
    <name type="ordered locus">At4g30510</name>
    <name type="ORF">F17I23.150</name>
</gene>
<accession>Q8H1Q8</accession>
<accession>Q9M0A9</accession>
<feature type="chain" id="PRO_0000421880" description="Autophagy-related protein 18b">
    <location>
        <begin position="1"/>
        <end position="366"/>
    </location>
</feature>
<feature type="repeat" description="WD 1">
    <location>
        <begin position="6"/>
        <end position="44"/>
    </location>
</feature>
<feature type="repeat" description="WD 2">
    <location>
        <begin position="178"/>
        <end position="218"/>
    </location>
</feature>
<feature type="repeat" description="WD 3">
    <location>
        <begin position="223"/>
        <end position="265"/>
    </location>
</feature>
<comment type="function">
    <text evidence="1">The PI(3,5)P2 regulatory complex regulates both the synthesis and turnover of phosphatidylinositol 3,5-bisphosphate (PtdIns(3,5)P2). Required for autophagy (By similarity).</text>
</comment>
<comment type="subunit">
    <text evidence="1">Component of the PI(3,5)P2 regulatory complex at least composed of ATG18, SAC/FIG4, FAB1 and VAC14.</text>
</comment>
<comment type="subcellular location">
    <subcellularLocation>
        <location evidence="1">Preautophagosomal structure membrane</location>
        <topology evidence="1">Peripheral membrane protein</topology>
    </subcellularLocation>
    <subcellularLocation>
        <location evidence="1">Vacuole membrane</location>
        <topology evidence="1">Peripheral membrane protein</topology>
    </subcellularLocation>
    <text evidence="1">Peripheral membrane protein of pre-autophagosomal structure (PAS) and vacuole.</text>
</comment>
<comment type="alternative products">
    <event type="alternative splicing"/>
    <isoform>
        <id>Q8H1Q8-1</id>
        <name>1</name>
        <sequence type="displayed"/>
    </isoform>
    <text>A number of isoforms are produced. According to EST sequences.</text>
</comment>
<comment type="tissue specificity">
    <text evidence="2">Expressed in roots, stems, flowers and leaves.</text>
</comment>
<comment type="domain">
    <text evidence="1">The first protein part may form a beta-propeller domain involved in specific binding to phosphatidylinositol 3,5-bisphosphate (PIP2), leading to the association of the protein to the membrane.</text>
</comment>
<comment type="similarity">
    <text evidence="3">Belongs to the WD repeat PROPPIN family.</text>
</comment>
<comment type="sequence caution" evidence="3">
    <conflict type="erroneous gene model prediction">
        <sequence resource="EMBL-CDS" id="CAB79769"/>
    </conflict>
</comment>
<evidence type="ECO:0000250" key="1"/>
<evidence type="ECO:0000269" key="2">
    <source>
    </source>
</evidence>
<evidence type="ECO:0000305" key="3"/>
<protein>
    <recommendedName>
        <fullName>Autophagy-related protein 18b</fullName>
        <shortName>AtATG18b</shortName>
    </recommendedName>
</protein>
<sequence>MANLSSLPSPIYCVSFNQDNSGFAISWKDSFKIFDSTTGRLCYERAAGAFVIVEMLYSSDLLAIVGAGEQASLSPRRLCLFKTTTGLPLRELNFLTSILAVRMNKKRLVVVLLEKTFVYDLNTLVMLDTIDTVPNPKGLSAFSPSLEGCYLAVPASTTKGSVLVYNVMDLQSHSEIDAHRSPLAAIALSSNGMYIATGSEQGTLIRVHLVSEATKSYSFRRGTYPSTIYSLSFGPSTQLPDILIATSSSGSIHAFSLSLAINQRSKRSTSFLGSVLPDSVSDALDPAHHHVLQNAVSSGIRSYAVVRKIDKLEGTSSPSHFTSLRATVSVITYNGYFQEYTLSINNKNESLWTLEREFNLFSITTG</sequence>